<comment type="function">
    <text evidence="1">Catalyzes the isomerization between 2-isopropylmalate and 3-isopropylmalate, via the formation of 2-isopropylmaleate.</text>
</comment>
<comment type="catalytic activity">
    <reaction evidence="1">
        <text>(2R,3S)-3-isopropylmalate = (2S)-2-isopropylmalate</text>
        <dbReference type="Rhea" id="RHEA:32287"/>
        <dbReference type="ChEBI" id="CHEBI:1178"/>
        <dbReference type="ChEBI" id="CHEBI:35121"/>
        <dbReference type="EC" id="4.2.1.33"/>
    </reaction>
</comment>
<comment type="pathway">
    <text evidence="1">Amino-acid biosynthesis; L-leucine biosynthesis; L-leucine from 3-methyl-2-oxobutanoate: step 2/4.</text>
</comment>
<comment type="subunit">
    <text evidence="1">Heterodimer of LeuC and LeuD.</text>
</comment>
<comment type="similarity">
    <text evidence="1">Belongs to the LeuD family. LeuD type 1 subfamily.</text>
</comment>
<protein>
    <recommendedName>
        <fullName evidence="1">3-isopropylmalate dehydratase small subunit</fullName>
        <ecNumber evidence="1">4.2.1.33</ecNumber>
    </recommendedName>
    <alternativeName>
        <fullName evidence="1">Alpha-IPM isomerase</fullName>
        <shortName evidence="1">IPMI</shortName>
    </alternativeName>
    <alternativeName>
        <fullName evidence="1">Isopropylmalate isomerase</fullName>
    </alternativeName>
</protein>
<gene>
    <name evidence="1" type="primary">leuD</name>
    <name type="ordered locus">EcSMS35_0076</name>
</gene>
<feature type="chain" id="PRO_1000135806" description="3-isopropylmalate dehydratase small subunit">
    <location>
        <begin position="1"/>
        <end position="201"/>
    </location>
</feature>
<accession>B1LG08</accession>
<reference key="1">
    <citation type="journal article" date="2008" name="J. Bacteriol.">
        <title>Insights into the environmental resistance gene pool from the genome sequence of the multidrug-resistant environmental isolate Escherichia coli SMS-3-5.</title>
        <authorList>
            <person name="Fricke W.F."/>
            <person name="Wright M.S."/>
            <person name="Lindell A.H."/>
            <person name="Harkins D.M."/>
            <person name="Baker-Austin C."/>
            <person name="Ravel J."/>
            <person name="Stepanauskas R."/>
        </authorList>
    </citation>
    <scope>NUCLEOTIDE SEQUENCE [LARGE SCALE GENOMIC DNA]</scope>
    <source>
        <strain>SMS-3-5 / SECEC</strain>
    </source>
</reference>
<keyword id="KW-0028">Amino-acid biosynthesis</keyword>
<keyword id="KW-0100">Branched-chain amino acid biosynthesis</keyword>
<keyword id="KW-0432">Leucine biosynthesis</keyword>
<keyword id="KW-0456">Lyase</keyword>
<dbReference type="EC" id="4.2.1.33" evidence="1"/>
<dbReference type="EMBL" id="CP000970">
    <property type="protein sequence ID" value="ACB18863.1"/>
    <property type="molecule type" value="Genomic_DNA"/>
</dbReference>
<dbReference type="RefSeq" id="WP_000818231.1">
    <property type="nucleotide sequence ID" value="NC_010498.1"/>
</dbReference>
<dbReference type="SMR" id="B1LG08"/>
<dbReference type="KEGG" id="ecm:EcSMS35_0076"/>
<dbReference type="HOGENOM" id="CLU_081378_0_3_6"/>
<dbReference type="UniPathway" id="UPA00048">
    <property type="reaction ID" value="UER00071"/>
</dbReference>
<dbReference type="Proteomes" id="UP000007011">
    <property type="component" value="Chromosome"/>
</dbReference>
<dbReference type="GO" id="GO:0009316">
    <property type="term" value="C:3-isopropylmalate dehydratase complex"/>
    <property type="evidence" value="ECO:0007669"/>
    <property type="project" value="InterPro"/>
</dbReference>
<dbReference type="GO" id="GO:0003861">
    <property type="term" value="F:3-isopropylmalate dehydratase activity"/>
    <property type="evidence" value="ECO:0007669"/>
    <property type="project" value="UniProtKB-UniRule"/>
</dbReference>
<dbReference type="GO" id="GO:0009098">
    <property type="term" value="P:L-leucine biosynthetic process"/>
    <property type="evidence" value="ECO:0007669"/>
    <property type="project" value="UniProtKB-UniRule"/>
</dbReference>
<dbReference type="CDD" id="cd01577">
    <property type="entry name" value="IPMI_Swivel"/>
    <property type="match status" value="1"/>
</dbReference>
<dbReference type="FunFam" id="3.20.19.10:FF:000003">
    <property type="entry name" value="3-isopropylmalate dehydratase small subunit"/>
    <property type="match status" value="1"/>
</dbReference>
<dbReference type="Gene3D" id="3.20.19.10">
    <property type="entry name" value="Aconitase, domain 4"/>
    <property type="match status" value="1"/>
</dbReference>
<dbReference type="HAMAP" id="MF_01031">
    <property type="entry name" value="LeuD_type1"/>
    <property type="match status" value="1"/>
</dbReference>
<dbReference type="InterPro" id="IPR004431">
    <property type="entry name" value="3-IsopropMal_deHydase_ssu"/>
</dbReference>
<dbReference type="InterPro" id="IPR015928">
    <property type="entry name" value="Aconitase/3IPM_dehydase_swvl"/>
</dbReference>
<dbReference type="InterPro" id="IPR000573">
    <property type="entry name" value="AconitaseA/IPMdHydase_ssu_swvl"/>
</dbReference>
<dbReference type="InterPro" id="IPR033940">
    <property type="entry name" value="IPMI_Swivel"/>
</dbReference>
<dbReference type="InterPro" id="IPR050075">
    <property type="entry name" value="LeuD"/>
</dbReference>
<dbReference type="NCBIfam" id="TIGR00171">
    <property type="entry name" value="leuD"/>
    <property type="match status" value="1"/>
</dbReference>
<dbReference type="NCBIfam" id="NF002458">
    <property type="entry name" value="PRK01641.1"/>
    <property type="match status" value="1"/>
</dbReference>
<dbReference type="PANTHER" id="PTHR43345:SF5">
    <property type="entry name" value="3-ISOPROPYLMALATE DEHYDRATASE SMALL SUBUNIT"/>
    <property type="match status" value="1"/>
</dbReference>
<dbReference type="PANTHER" id="PTHR43345">
    <property type="entry name" value="3-ISOPROPYLMALATE DEHYDRATASE SMALL SUBUNIT 2-RELATED-RELATED"/>
    <property type="match status" value="1"/>
</dbReference>
<dbReference type="Pfam" id="PF00694">
    <property type="entry name" value="Aconitase_C"/>
    <property type="match status" value="1"/>
</dbReference>
<dbReference type="SUPFAM" id="SSF52016">
    <property type="entry name" value="LeuD/IlvD-like"/>
    <property type="match status" value="1"/>
</dbReference>
<evidence type="ECO:0000255" key="1">
    <source>
        <dbReference type="HAMAP-Rule" id="MF_01031"/>
    </source>
</evidence>
<proteinExistence type="inferred from homology"/>
<name>LEUD_ECOSM</name>
<sequence>MAEKFIKHTGLVVPLDAANVDTDAIIPKQFLQKVTRTGFGAHLFNDWRFLDEKGQQPNPDFVLNFPQYQGASILLARENFGCGSSREHAPWALTDYGFKVVIAPSFADIFYGNSFNNQLLPVKLSDAEVDELFALVKANPGIHFDVDLEAQEVKAGEKTYRFTIDAFRRHCMMNGLDSIGLTLQHDDAIASYEEKQPAFMR</sequence>
<organism>
    <name type="scientific">Escherichia coli (strain SMS-3-5 / SECEC)</name>
    <dbReference type="NCBI Taxonomy" id="439855"/>
    <lineage>
        <taxon>Bacteria</taxon>
        <taxon>Pseudomonadati</taxon>
        <taxon>Pseudomonadota</taxon>
        <taxon>Gammaproteobacteria</taxon>
        <taxon>Enterobacterales</taxon>
        <taxon>Enterobacteriaceae</taxon>
        <taxon>Escherichia</taxon>
    </lineage>
</organism>